<protein>
    <recommendedName>
        <fullName evidence="1">Maturase K</fullName>
    </recommendedName>
    <alternativeName>
        <fullName evidence="1">Intron maturase</fullName>
    </alternativeName>
</protein>
<gene>
    <name evidence="1" type="primary">matK</name>
</gene>
<organism>
    <name type="scientific">Castanea crenata</name>
    <name type="common">Japanese chestnut</name>
    <dbReference type="NCBI Taxonomy" id="103480"/>
    <lineage>
        <taxon>Eukaryota</taxon>
        <taxon>Viridiplantae</taxon>
        <taxon>Streptophyta</taxon>
        <taxon>Embryophyta</taxon>
        <taxon>Tracheophyta</taxon>
        <taxon>Spermatophyta</taxon>
        <taxon>Magnoliopsida</taxon>
        <taxon>eudicotyledons</taxon>
        <taxon>Gunneridae</taxon>
        <taxon>Pentapetalae</taxon>
        <taxon>rosids</taxon>
        <taxon>fabids</taxon>
        <taxon>Fagales</taxon>
        <taxon>Fagaceae</taxon>
        <taxon>Castanea</taxon>
    </lineage>
</organism>
<sequence>MLLENIGYDNKSSLLIVKRLITTMYQQNYLIISANDSKQNPFFGYNKNLHSKILSEGFAIIVEIPFYLRLISSLEGAEIVRFYNLRSIHSIFPFLEEKFPHLNYSADILIPYPAHLEILVQTLRYRVKDASYLHLLRFFLHEYSNCNSLIITNKSISIFSKSNPRFFLFLYNSYICEYESIFLFLRNQSSHLRLTSSGVLFERLCLYRKIEHFAEVFANDFPVIPCFLKDPFMHYVRYQGKSILASKDTPLLMNKWKSYLVNLWQCHFDVWSHAASIRINQLSKHSLDFLSYFSSVRRNPAVVRNQMLENSFPLNNAPNKLDTIVPIIPLIGSLAKAKFCNAVGHPISKLTRADLSDFEIINRFLHICRNLSHYYSGSSKKKNMYRIKYILRLSCVKTLARKHKSTARAFLKRVDSEFFQEFFTEEGGFISLIFPRASFALRRLYSGRVWYLDIIFINGLSNHE</sequence>
<accession>Q76DY9</accession>
<proteinExistence type="inferred from homology"/>
<keyword id="KW-0150">Chloroplast</keyword>
<keyword id="KW-0507">mRNA processing</keyword>
<keyword id="KW-0934">Plastid</keyword>
<keyword id="KW-0694">RNA-binding</keyword>
<keyword id="KW-0819">tRNA processing</keyword>
<comment type="function">
    <text evidence="1">Usually encoded in the trnK tRNA gene intron. Probably assists in splicing its own and other chloroplast group II introns.</text>
</comment>
<comment type="subcellular location">
    <subcellularLocation>
        <location>Plastid</location>
        <location>Chloroplast</location>
    </subcellularLocation>
</comment>
<comment type="similarity">
    <text evidence="1">Belongs to the intron maturase 2 family. MatK subfamily.</text>
</comment>
<feature type="chain" id="PRO_0000143314" description="Maturase K">
    <location>
        <begin position="1"/>
        <end position="464"/>
    </location>
</feature>
<geneLocation type="chloroplast"/>
<dbReference type="EMBL" id="AB107636">
    <property type="protein sequence ID" value="BAC98487.1"/>
    <property type="molecule type" value="Genomic_DNA"/>
</dbReference>
<dbReference type="GO" id="GO:0009507">
    <property type="term" value="C:chloroplast"/>
    <property type="evidence" value="ECO:0007669"/>
    <property type="project" value="UniProtKB-SubCell"/>
</dbReference>
<dbReference type="GO" id="GO:0003723">
    <property type="term" value="F:RNA binding"/>
    <property type="evidence" value="ECO:0007669"/>
    <property type="project" value="UniProtKB-KW"/>
</dbReference>
<dbReference type="GO" id="GO:0006397">
    <property type="term" value="P:mRNA processing"/>
    <property type="evidence" value="ECO:0007669"/>
    <property type="project" value="UniProtKB-KW"/>
</dbReference>
<dbReference type="GO" id="GO:0008380">
    <property type="term" value="P:RNA splicing"/>
    <property type="evidence" value="ECO:0007669"/>
    <property type="project" value="UniProtKB-UniRule"/>
</dbReference>
<dbReference type="GO" id="GO:0008033">
    <property type="term" value="P:tRNA processing"/>
    <property type="evidence" value="ECO:0007669"/>
    <property type="project" value="UniProtKB-KW"/>
</dbReference>
<dbReference type="HAMAP" id="MF_01390">
    <property type="entry name" value="MatK"/>
    <property type="match status" value="1"/>
</dbReference>
<dbReference type="InterPro" id="IPR024937">
    <property type="entry name" value="Domain_X"/>
</dbReference>
<dbReference type="InterPro" id="IPR002866">
    <property type="entry name" value="Maturase_MatK"/>
</dbReference>
<dbReference type="InterPro" id="IPR024942">
    <property type="entry name" value="Maturase_MatK_N"/>
</dbReference>
<dbReference type="PANTHER" id="PTHR34811">
    <property type="entry name" value="MATURASE K"/>
    <property type="match status" value="1"/>
</dbReference>
<dbReference type="PANTHER" id="PTHR34811:SF1">
    <property type="entry name" value="MATURASE K"/>
    <property type="match status" value="1"/>
</dbReference>
<dbReference type="Pfam" id="PF01348">
    <property type="entry name" value="Intron_maturas2"/>
    <property type="match status" value="1"/>
</dbReference>
<dbReference type="Pfam" id="PF01824">
    <property type="entry name" value="MatK_N"/>
    <property type="match status" value="1"/>
</dbReference>
<reference key="1">
    <citation type="submission" date="2003-04" db="EMBL/GenBank/DDBJ databases">
        <title>Subgenus Quercus cpDNA haplotype.</title>
        <authorList>
            <person name="Okaura T."/>
            <person name="Ubukata M."/>
            <person name="Harada K."/>
        </authorList>
    </citation>
    <scope>NUCLEOTIDE SEQUENCE [GENOMIC DNA]</scope>
</reference>
<evidence type="ECO:0000255" key="1">
    <source>
        <dbReference type="HAMAP-Rule" id="MF_01390"/>
    </source>
</evidence>
<name>MATK_CASCR</name>